<proteinExistence type="inferred from homology"/>
<gene>
    <name type="primary">cadB</name>
    <name type="ordered locus">Z5735</name>
    <name type="ordered locus">ECs5114</name>
</gene>
<keyword id="KW-0029">Amino-acid transport</keyword>
<keyword id="KW-0050">Antiport</keyword>
<keyword id="KW-0997">Cell inner membrane</keyword>
<keyword id="KW-1003">Cell membrane</keyword>
<keyword id="KW-0472">Membrane</keyword>
<keyword id="KW-1185">Reference proteome</keyword>
<keyword id="KW-0812">Transmembrane</keyword>
<keyword id="KW-1133">Transmembrane helix</keyword>
<keyword id="KW-0813">Transport</keyword>
<comment type="function">
    <text evidence="1">Under acidic conditions, in the presence of lysine, functions as a cadaverine:lysine antiporter that facilitates the excretion of cadaverine and the uptake of lysine.</text>
</comment>
<comment type="catalytic activity">
    <reaction evidence="1">
        <text>cadaverine(in) + L-lysine(out) = cadaverine(out) + L-lysine(in)</text>
        <dbReference type="Rhea" id="RHEA:28895"/>
        <dbReference type="ChEBI" id="CHEBI:32551"/>
        <dbReference type="ChEBI" id="CHEBI:58384"/>
    </reaction>
    <physiologicalReaction direction="left-to-right" evidence="1">
        <dbReference type="Rhea" id="RHEA:28896"/>
    </physiologicalReaction>
</comment>
<comment type="subcellular location">
    <subcellularLocation>
        <location evidence="1">Cell inner membrane</location>
        <topology evidence="2">Multi-pass membrane protein</topology>
    </subcellularLocation>
</comment>
<comment type="similarity">
    <text evidence="3">Belongs to the amino acid-polyamine-organocation (APC) superfamily. Basic amino acid/polyamine antiporter (APA) (TC 2.A.3.2) family.</text>
</comment>
<accession>P0AAF0</accession>
<accession>P23891</accession>
<feature type="chain" id="PRO_0000054245" description="Cadaverine/lysine antiporter">
    <location>
        <begin position="1"/>
        <end position="444"/>
    </location>
</feature>
<feature type="transmembrane region" description="Helical" evidence="2">
    <location>
        <begin position="7"/>
        <end position="27"/>
    </location>
</feature>
<feature type="transmembrane region" description="Helical" evidence="2">
    <location>
        <begin position="35"/>
        <end position="55"/>
    </location>
</feature>
<feature type="transmembrane region" description="Helical" evidence="2">
    <location>
        <begin position="95"/>
        <end position="115"/>
    </location>
</feature>
<feature type="transmembrane region" description="Helical" evidence="2">
    <location>
        <begin position="123"/>
        <end position="143"/>
    </location>
</feature>
<feature type="transmembrane region" description="Helical" evidence="2">
    <location>
        <begin position="149"/>
        <end position="169"/>
    </location>
</feature>
<feature type="transmembrane region" description="Helical" evidence="2">
    <location>
        <begin position="193"/>
        <end position="213"/>
    </location>
</feature>
<feature type="transmembrane region" description="Helical" evidence="2">
    <location>
        <begin position="222"/>
        <end position="242"/>
    </location>
</feature>
<feature type="transmembrane region" description="Helical" evidence="2">
    <location>
        <begin position="273"/>
        <end position="293"/>
    </location>
</feature>
<feature type="transmembrane region" description="Helical" evidence="2">
    <location>
        <begin position="323"/>
        <end position="343"/>
    </location>
</feature>
<feature type="transmembrane region" description="Helical" evidence="2">
    <location>
        <begin position="354"/>
        <end position="374"/>
    </location>
</feature>
<feature type="transmembrane region" description="Helical" evidence="2">
    <location>
        <begin position="384"/>
        <end position="404"/>
    </location>
</feature>
<feature type="transmembrane region" description="Helical" evidence="2">
    <location>
        <begin position="405"/>
        <end position="425"/>
    </location>
</feature>
<name>CADB_ECO57</name>
<dbReference type="EMBL" id="AE005174">
    <property type="protein sequence ID" value="AAG59332.1"/>
    <property type="molecule type" value="Genomic_DNA"/>
</dbReference>
<dbReference type="EMBL" id="BA000007">
    <property type="protein sequence ID" value="BAB38537.1"/>
    <property type="molecule type" value="Genomic_DNA"/>
</dbReference>
<dbReference type="PIR" id="B91268">
    <property type="entry name" value="B91268"/>
</dbReference>
<dbReference type="RefSeq" id="NP_313141.1">
    <property type="nucleotide sequence ID" value="NC_002695.1"/>
</dbReference>
<dbReference type="RefSeq" id="WP_000092909.1">
    <property type="nucleotide sequence ID" value="NZ_VOAI01000008.1"/>
</dbReference>
<dbReference type="SMR" id="P0AAF0"/>
<dbReference type="STRING" id="155864.Z5735"/>
<dbReference type="GeneID" id="75203985"/>
<dbReference type="GeneID" id="914165"/>
<dbReference type="KEGG" id="ece:Z5735"/>
<dbReference type="KEGG" id="ecs:ECs_5114"/>
<dbReference type="PATRIC" id="fig|386585.9.peg.5345"/>
<dbReference type="eggNOG" id="COG0531">
    <property type="taxonomic scope" value="Bacteria"/>
</dbReference>
<dbReference type="HOGENOM" id="CLU_007946_1_0_6"/>
<dbReference type="OMA" id="FAYDGWL"/>
<dbReference type="Proteomes" id="UP000000558">
    <property type="component" value="Chromosome"/>
</dbReference>
<dbReference type="Proteomes" id="UP000002519">
    <property type="component" value="Chromosome"/>
</dbReference>
<dbReference type="GO" id="GO:0005886">
    <property type="term" value="C:plasma membrane"/>
    <property type="evidence" value="ECO:0007669"/>
    <property type="project" value="UniProtKB-SubCell"/>
</dbReference>
<dbReference type="GO" id="GO:0015297">
    <property type="term" value="F:antiporter activity"/>
    <property type="evidence" value="ECO:0007669"/>
    <property type="project" value="UniProtKB-KW"/>
</dbReference>
<dbReference type="GO" id="GO:0006865">
    <property type="term" value="P:amino acid transport"/>
    <property type="evidence" value="ECO:0007669"/>
    <property type="project" value="UniProtKB-KW"/>
</dbReference>
<dbReference type="FunFam" id="1.20.1740.10:FF:000020">
    <property type="entry name" value="Putative cadaverine/lysine antiporter CadB"/>
    <property type="match status" value="1"/>
</dbReference>
<dbReference type="Gene3D" id="1.20.1740.10">
    <property type="entry name" value="Amino acid/polyamine transporter I"/>
    <property type="match status" value="1"/>
</dbReference>
<dbReference type="InterPro" id="IPR002293">
    <property type="entry name" value="AA/rel_permease1"/>
</dbReference>
<dbReference type="InterPro" id="IPR004754">
    <property type="entry name" value="Amino_acid_antiprt"/>
</dbReference>
<dbReference type="InterPro" id="IPR050367">
    <property type="entry name" value="APC_superfamily"/>
</dbReference>
<dbReference type="NCBIfam" id="TIGR00905">
    <property type="entry name" value="2A0302"/>
    <property type="match status" value="1"/>
</dbReference>
<dbReference type="NCBIfam" id="NF007754">
    <property type="entry name" value="PRK10435.1"/>
    <property type="match status" value="1"/>
</dbReference>
<dbReference type="PANTHER" id="PTHR42770">
    <property type="entry name" value="AMINO ACID TRANSPORTER-RELATED"/>
    <property type="match status" value="1"/>
</dbReference>
<dbReference type="PANTHER" id="PTHR42770:SF5">
    <property type="entry name" value="CADAVERINE_LYSINE ANTIPORTER"/>
    <property type="match status" value="1"/>
</dbReference>
<dbReference type="Pfam" id="PF13520">
    <property type="entry name" value="AA_permease_2"/>
    <property type="match status" value="1"/>
</dbReference>
<dbReference type="PIRSF" id="PIRSF006060">
    <property type="entry name" value="AA_transporter"/>
    <property type="match status" value="1"/>
</dbReference>
<organism>
    <name type="scientific">Escherichia coli O157:H7</name>
    <dbReference type="NCBI Taxonomy" id="83334"/>
    <lineage>
        <taxon>Bacteria</taxon>
        <taxon>Pseudomonadati</taxon>
        <taxon>Pseudomonadota</taxon>
        <taxon>Gammaproteobacteria</taxon>
        <taxon>Enterobacterales</taxon>
        <taxon>Enterobacteriaceae</taxon>
        <taxon>Escherichia</taxon>
    </lineage>
</organism>
<reference key="1">
    <citation type="journal article" date="2001" name="Nature">
        <title>Genome sequence of enterohaemorrhagic Escherichia coli O157:H7.</title>
        <authorList>
            <person name="Perna N.T."/>
            <person name="Plunkett G. III"/>
            <person name="Burland V."/>
            <person name="Mau B."/>
            <person name="Glasner J.D."/>
            <person name="Rose D.J."/>
            <person name="Mayhew G.F."/>
            <person name="Evans P.S."/>
            <person name="Gregor J."/>
            <person name="Kirkpatrick H.A."/>
            <person name="Posfai G."/>
            <person name="Hackett J."/>
            <person name="Klink S."/>
            <person name="Boutin A."/>
            <person name="Shao Y."/>
            <person name="Miller L."/>
            <person name="Grotbeck E.J."/>
            <person name="Davis N.W."/>
            <person name="Lim A."/>
            <person name="Dimalanta E.T."/>
            <person name="Potamousis K."/>
            <person name="Apodaca J."/>
            <person name="Anantharaman T.S."/>
            <person name="Lin J."/>
            <person name="Yen G."/>
            <person name="Schwartz D.C."/>
            <person name="Welch R.A."/>
            <person name="Blattner F.R."/>
        </authorList>
    </citation>
    <scope>NUCLEOTIDE SEQUENCE [LARGE SCALE GENOMIC DNA]</scope>
    <source>
        <strain>O157:H7 / EDL933 / ATCC 700927 / EHEC</strain>
    </source>
</reference>
<reference key="2">
    <citation type="journal article" date="2001" name="DNA Res.">
        <title>Complete genome sequence of enterohemorrhagic Escherichia coli O157:H7 and genomic comparison with a laboratory strain K-12.</title>
        <authorList>
            <person name="Hayashi T."/>
            <person name="Makino K."/>
            <person name="Ohnishi M."/>
            <person name="Kurokawa K."/>
            <person name="Ishii K."/>
            <person name="Yokoyama K."/>
            <person name="Han C.-G."/>
            <person name="Ohtsubo E."/>
            <person name="Nakayama K."/>
            <person name="Murata T."/>
            <person name="Tanaka M."/>
            <person name="Tobe T."/>
            <person name="Iida T."/>
            <person name="Takami H."/>
            <person name="Honda T."/>
            <person name="Sasakawa C."/>
            <person name="Ogasawara N."/>
            <person name="Yasunaga T."/>
            <person name="Kuhara S."/>
            <person name="Shiba T."/>
            <person name="Hattori M."/>
            <person name="Shinagawa H."/>
        </authorList>
    </citation>
    <scope>NUCLEOTIDE SEQUENCE [LARGE SCALE GENOMIC DNA]</scope>
    <source>
        <strain>O157:H7 / Sakai / RIMD 0509952 / EHEC</strain>
    </source>
</reference>
<protein>
    <recommendedName>
        <fullName evidence="1">Cadaverine/lysine antiporter</fullName>
    </recommendedName>
</protein>
<evidence type="ECO:0000250" key="1">
    <source>
        <dbReference type="UniProtKB" id="P0AAE8"/>
    </source>
</evidence>
<evidence type="ECO:0000255" key="2"/>
<evidence type="ECO:0000305" key="3"/>
<sequence>MSSAKKIGLFACTGVVAGNMMGSGIALLPANLASIGGIAIWGWIISIIGAMSLAYVYARLATKNPQQGGPIAYAGEISPAFGFQTGVLYYHANWIGNLAIGITAVSYLSTFFPVLNDPVPAGIACIAIVWVFTFVNMLGGTWVSRLTTIGLVLVLIPVVMTAIVGWHWFDAATYAANWNTADTTDGHAIIKSILLCLWAFVGVESAAVSTGMVKNPKRTVPLATMLGTGLAGIVYIAATQVLSGMYPSSVMAASGAPFAISASTILGNWAAPLVSAFTAFACLTSLGSWMMLVGQAGVRAANDGNFPKVYGEVDSNGIPKKGLLLAAVKMTALMILITLMNSAGGKASDLFGELTGIAVLLTMLPYFYSCVDLIRFEGVNIRNFVSLICSVLGCVFCFIALMGASSFELAGTFIVSLIILMFYARKMHERQSHSMDNHTASNAH</sequence>